<evidence type="ECO:0000250" key="1">
    <source>
        <dbReference type="UniProtKB" id="A3KPQ7"/>
    </source>
</evidence>
<evidence type="ECO:0000250" key="2">
    <source>
        <dbReference type="UniProtKB" id="Q5FWI3"/>
    </source>
</evidence>
<evidence type="ECO:0000255" key="3"/>
<evidence type="ECO:0000255" key="4">
    <source>
        <dbReference type="PROSITE-ProRule" id="PRU00817"/>
    </source>
</evidence>
<evidence type="ECO:0000255" key="5">
    <source>
        <dbReference type="PROSITE-ProRule" id="PRU01375"/>
    </source>
</evidence>
<evidence type="ECO:0000256" key="6">
    <source>
        <dbReference type="SAM" id="MobiDB-lite"/>
    </source>
</evidence>
<evidence type="ECO:0000269" key="7">
    <source>
    </source>
</evidence>
<evidence type="ECO:0000269" key="8">
    <source>
    </source>
</evidence>
<evidence type="ECO:0000269" key="9">
    <source>
    </source>
</evidence>
<evidence type="ECO:0000303" key="10">
    <source>
    </source>
</evidence>
<evidence type="ECO:0000303" key="11">
    <source>
    </source>
</evidence>
<evidence type="ECO:0000303" key="12">
    <source>
    </source>
</evidence>
<evidence type="ECO:0000305" key="13"/>
<evidence type="ECO:0000312" key="14">
    <source>
        <dbReference type="HGNC" id="HGNC:11869"/>
    </source>
</evidence>
<evidence type="ECO:0007744" key="15">
    <source>
        <dbReference type="PDB" id="8C6I"/>
    </source>
</evidence>
<evidence type="ECO:0007744" key="16">
    <source>
    </source>
</evidence>
<evidence type="ECO:0007829" key="17">
    <source>
        <dbReference type="PDB" id="8C6I"/>
    </source>
</evidence>
<accession>Q9UHN6</accession>
<accession>A6H8W9</accession>
<accession>B2RTQ6</accession>
<accession>Q5T838</accession>
<accession>Q5T839</accession>
<accession>Q5T840</accession>
<accession>Q5T841</accession>
<accession>Q8NBP6</accession>
<accession>Q9P2D5</accession>
<dbReference type="EC" id="3.2.1.35" evidence="9"/>
<dbReference type="EMBL" id="AF137030">
    <property type="protein sequence ID" value="AAF21348.1"/>
    <property type="molecule type" value="mRNA"/>
</dbReference>
<dbReference type="EMBL" id="AB037833">
    <property type="protein sequence ID" value="BAA92650.2"/>
    <property type="status" value="ALT_INIT"/>
    <property type="molecule type" value="mRNA"/>
</dbReference>
<dbReference type="EMBL" id="AL161732">
    <property type="status" value="NOT_ANNOTATED_CDS"/>
    <property type="molecule type" value="Genomic_DNA"/>
</dbReference>
<dbReference type="EMBL" id="CH471089">
    <property type="protein sequence ID" value="EAW62518.1"/>
    <property type="molecule type" value="Genomic_DNA"/>
</dbReference>
<dbReference type="EMBL" id="BC140773">
    <property type="protein sequence ID" value="AAI40774.1"/>
    <property type="molecule type" value="mRNA"/>
</dbReference>
<dbReference type="EMBL" id="BC146780">
    <property type="protein sequence ID" value="AAI46781.1"/>
    <property type="molecule type" value="mRNA"/>
</dbReference>
<dbReference type="EMBL" id="AK075370">
    <property type="protein sequence ID" value="BAC11574.1"/>
    <property type="status" value="ALT_INIT"/>
    <property type="molecule type" value="mRNA"/>
</dbReference>
<dbReference type="CCDS" id="CCDS47979.1">
    <molecule id="Q9UHN6-2"/>
</dbReference>
<dbReference type="CCDS" id="CCDS6638.1">
    <molecule id="Q9UHN6-1"/>
</dbReference>
<dbReference type="RefSeq" id="NP_001129292.1">
    <molecule id="Q9UHN6-2"/>
    <property type="nucleotide sequence ID" value="NM_001135820.2"/>
</dbReference>
<dbReference type="RefSeq" id="NP_037522.1">
    <molecule id="Q9UHN6-1"/>
    <property type="nucleotide sequence ID" value="NM_013390.3"/>
</dbReference>
<dbReference type="RefSeq" id="XP_005251926.1">
    <molecule id="Q9UHN6-1"/>
    <property type="nucleotide sequence ID" value="XM_005251869.5"/>
</dbReference>
<dbReference type="RefSeq" id="XP_047279092.1">
    <molecule id="Q9UHN6-2"/>
    <property type="nucleotide sequence ID" value="XM_047423136.1"/>
</dbReference>
<dbReference type="RefSeq" id="XP_054218563.1">
    <molecule id="Q9UHN6-1"/>
    <property type="nucleotide sequence ID" value="XM_054362588.1"/>
</dbReference>
<dbReference type="RefSeq" id="XP_054218564.1">
    <molecule id="Q9UHN6-2"/>
    <property type="nucleotide sequence ID" value="XM_054362589.1"/>
</dbReference>
<dbReference type="PDB" id="8C6I">
    <property type="method" value="X-ray"/>
    <property type="resolution" value="3.50 A"/>
    <property type="chains" value="A=106-1383"/>
</dbReference>
<dbReference type="PDBsum" id="8C6I"/>
<dbReference type="SMR" id="Q9UHN6"/>
<dbReference type="BioGRID" id="117188">
    <property type="interactions" value="135"/>
</dbReference>
<dbReference type="FunCoup" id="Q9UHN6">
    <property type="interactions" value="1459"/>
</dbReference>
<dbReference type="IntAct" id="Q9UHN6">
    <property type="interactions" value="60"/>
</dbReference>
<dbReference type="MINT" id="Q9UHN6"/>
<dbReference type="STRING" id="9606.ENSP00000366243"/>
<dbReference type="DrugBank" id="DB08818">
    <property type="generic name" value="Hyaluronic acid"/>
</dbReference>
<dbReference type="GlyConnect" id="1851">
    <property type="glycosylation" value="3 N-Linked glycans (2 sites)"/>
</dbReference>
<dbReference type="GlyCosmos" id="Q9UHN6">
    <property type="glycosylation" value="5 sites, 3 glycans"/>
</dbReference>
<dbReference type="GlyGen" id="Q9UHN6">
    <property type="glycosylation" value="14 sites, 21 N-linked glycans (12 sites), 1 O-linked glycan (1 site)"/>
</dbReference>
<dbReference type="iPTMnet" id="Q9UHN6"/>
<dbReference type="PhosphoSitePlus" id="Q9UHN6"/>
<dbReference type="SwissPalm" id="Q9UHN6"/>
<dbReference type="BioMuta" id="TMEM2"/>
<dbReference type="DMDM" id="74753330"/>
<dbReference type="jPOST" id="Q9UHN6"/>
<dbReference type="MassIVE" id="Q9UHN6"/>
<dbReference type="PaxDb" id="9606-ENSP00000366243"/>
<dbReference type="PeptideAtlas" id="Q9UHN6"/>
<dbReference type="ProteomicsDB" id="84383">
    <molecule id="Q9UHN6-1"/>
</dbReference>
<dbReference type="ProteomicsDB" id="84384">
    <molecule id="Q9UHN6-2"/>
</dbReference>
<dbReference type="Pumba" id="Q9UHN6"/>
<dbReference type="Antibodypedia" id="43356">
    <property type="antibodies" value="74 antibodies from 21 providers"/>
</dbReference>
<dbReference type="DNASU" id="23670"/>
<dbReference type="Ensembl" id="ENST00000377044.9">
    <molecule id="Q9UHN6-1"/>
    <property type="protein sequence ID" value="ENSP00000366243.4"/>
    <property type="gene ID" value="ENSG00000135048.14"/>
</dbReference>
<dbReference type="Ensembl" id="ENST00000377066.9">
    <molecule id="Q9UHN6-2"/>
    <property type="protein sequence ID" value="ENSP00000366266.5"/>
    <property type="gene ID" value="ENSG00000135048.14"/>
</dbReference>
<dbReference type="GeneID" id="23670"/>
<dbReference type="KEGG" id="hsa:23670"/>
<dbReference type="MANE-Select" id="ENST00000377044.9">
    <property type="protein sequence ID" value="ENSP00000366243.4"/>
    <property type="RefSeq nucleotide sequence ID" value="NM_013390.3"/>
    <property type="RefSeq protein sequence ID" value="NP_037522.1"/>
</dbReference>
<dbReference type="UCSC" id="uc010mos.3">
    <molecule id="Q9UHN6-1"/>
    <property type="organism name" value="human"/>
</dbReference>
<dbReference type="AGR" id="HGNC:11869"/>
<dbReference type="CTD" id="23670"/>
<dbReference type="DisGeNET" id="23670"/>
<dbReference type="GeneCards" id="CEMIP2"/>
<dbReference type="HGNC" id="HGNC:11869">
    <property type="gene designation" value="CEMIP2"/>
</dbReference>
<dbReference type="HPA" id="ENSG00000135048">
    <property type="expression patterns" value="Tissue enhanced (parathyroid gland, placenta)"/>
</dbReference>
<dbReference type="MalaCards" id="CEMIP2"/>
<dbReference type="MIM" id="605835">
    <property type="type" value="gene"/>
</dbReference>
<dbReference type="neXtProt" id="NX_Q9UHN6"/>
<dbReference type="OpenTargets" id="ENSG00000135048"/>
<dbReference type="PharmGKB" id="PA36570"/>
<dbReference type="VEuPathDB" id="HostDB:ENSG00000135048"/>
<dbReference type="eggNOG" id="ENOG502QUM7">
    <property type="taxonomic scope" value="Eukaryota"/>
</dbReference>
<dbReference type="GeneTree" id="ENSGT00940000153636"/>
<dbReference type="HOGENOM" id="CLU_005606_0_0_1"/>
<dbReference type="InParanoid" id="Q9UHN6"/>
<dbReference type="OMA" id="DYGCPRA"/>
<dbReference type="OrthoDB" id="120976at2759"/>
<dbReference type="PAN-GO" id="Q9UHN6">
    <property type="GO annotations" value="0 GO annotations based on evolutionary models"/>
</dbReference>
<dbReference type="PhylomeDB" id="Q9UHN6"/>
<dbReference type="TreeFam" id="TF316575"/>
<dbReference type="PathwayCommons" id="Q9UHN6"/>
<dbReference type="SignaLink" id="Q9UHN6"/>
<dbReference type="SIGNOR" id="Q9UHN6"/>
<dbReference type="BioGRID-ORCS" id="23670">
    <property type="hits" value="15 hits in 1158 CRISPR screens"/>
</dbReference>
<dbReference type="ChiTaRS" id="TMEM2">
    <property type="organism name" value="human"/>
</dbReference>
<dbReference type="GenomeRNAi" id="23670"/>
<dbReference type="Pharos" id="Q9UHN6">
    <property type="development level" value="Tbio"/>
</dbReference>
<dbReference type="PRO" id="PR:Q9UHN6"/>
<dbReference type="Proteomes" id="UP000005640">
    <property type="component" value="Chromosome 9"/>
</dbReference>
<dbReference type="RNAct" id="Q9UHN6">
    <property type="molecule type" value="protein"/>
</dbReference>
<dbReference type="Bgee" id="ENSG00000135048">
    <property type="expression patterns" value="Expressed in upper lobe of left lung and 167 other cell types or tissues"/>
</dbReference>
<dbReference type="ExpressionAtlas" id="Q9UHN6">
    <property type="expression patterns" value="baseline and differential"/>
</dbReference>
<dbReference type="GO" id="GO:0005829">
    <property type="term" value="C:cytosol"/>
    <property type="evidence" value="ECO:0000314"/>
    <property type="project" value="HPA"/>
</dbReference>
<dbReference type="GO" id="GO:0070062">
    <property type="term" value="C:extracellular exosome"/>
    <property type="evidence" value="ECO:0007005"/>
    <property type="project" value="UniProtKB"/>
</dbReference>
<dbReference type="GO" id="GO:0043231">
    <property type="term" value="C:intracellular membrane-bounded organelle"/>
    <property type="evidence" value="ECO:0000314"/>
    <property type="project" value="HPA"/>
</dbReference>
<dbReference type="GO" id="GO:0016020">
    <property type="term" value="C:membrane"/>
    <property type="evidence" value="ECO:0000304"/>
    <property type="project" value="ProtInc"/>
</dbReference>
<dbReference type="GO" id="GO:0005730">
    <property type="term" value="C:nucleolus"/>
    <property type="evidence" value="ECO:0000314"/>
    <property type="project" value="HPA"/>
</dbReference>
<dbReference type="GO" id="GO:0005886">
    <property type="term" value="C:plasma membrane"/>
    <property type="evidence" value="ECO:0000314"/>
    <property type="project" value="HPA"/>
</dbReference>
<dbReference type="GO" id="GO:0045296">
    <property type="term" value="F:cadherin binding"/>
    <property type="evidence" value="ECO:0007005"/>
    <property type="project" value="BHF-UCL"/>
</dbReference>
<dbReference type="GO" id="GO:0005509">
    <property type="term" value="F:calcium ion binding"/>
    <property type="evidence" value="ECO:0000314"/>
    <property type="project" value="UniProtKB"/>
</dbReference>
<dbReference type="GO" id="GO:0030246">
    <property type="term" value="F:carbohydrate binding"/>
    <property type="evidence" value="ECO:0007669"/>
    <property type="project" value="UniProtKB-KW"/>
</dbReference>
<dbReference type="GO" id="GO:0004415">
    <property type="term" value="F:hyalurononglucosaminidase activity"/>
    <property type="evidence" value="ECO:0000314"/>
    <property type="project" value="UniProtKB"/>
</dbReference>
<dbReference type="GO" id="GO:0001525">
    <property type="term" value="P:angiogenesis"/>
    <property type="evidence" value="ECO:0007669"/>
    <property type="project" value="UniProtKB-KW"/>
</dbReference>
<dbReference type="GO" id="GO:0030214">
    <property type="term" value="P:hyaluronan catabolic process"/>
    <property type="evidence" value="ECO:0007669"/>
    <property type="project" value="Ensembl"/>
</dbReference>
<dbReference type="GO" id="GO:1903670">
    <property type="term" value="P:regulation of sprouting angiogenesis"/>
    <property type="evidence" value="ECO:0000250"/>
    <property type="project" value="UniProtKB"/>
</dbReference>
<dbReference type="CDD" id="cd13938">
    <property type="entry name" value="PANDER_like_TMEM2"/>
    <property type="match status" value="1"/>
</dbReference>
<dbReference type="InterPro" id="IPR052252">
    <property type="entry name" value="CEMIP/CEMIP2"/>
</dbReference>
<dbReference type="InterPro" id="IPR055401">
    <property type="entry name" value="CEMIP_beta-hel_dom"/>
</dbReference>
<dbReference type="InterPro" id="IPR055400">
    <property type="entry name" value="CEMIP_X"/>
</dbReference>
<dbReference type="InterPro" id="IPR019316">
    <property type="entry name" value="G8_domain"/>
</dbReference>
<dbReference type="InterPro" id="IPR039477">
    <property type="entry name" value="ILEI/PANDER_dom"/>
</dbReference>
<dbReference type="InterPro" id="IPR011050">
    <property type="entry name" value="Pectin_lyase_fold/virulence"/>
</dbReference>
<dbReference type="InterPro" id="IPR039473">
    <property type="entry name" value="TMEM2_PANDER-like"/>
</dbReference>
<dbReference type="PANTHER" id="PTHR15535:SF26">
    <property type="entry name" value="CELL SURFACE HYALURONIDASE"/>
    <property type="match status" value="1"/>
</dbReference>
<dbReference type="PANTHER" id="PTHR15535">
    <property type="entry name" value="TRANSMEMBRANE PROTEIN 2-RELATED"/>
    <property type="match status" value="1"/>
</dbReference>
<dbReference type="Pfam" id="PF24606">
    <property type="entry name" value="CEMIP_beta-hel"/>
    <property type="match status" value="1"/>
</dbReference>
<dbReference type="Pfam" id="PF24605">
    <property type="entry name" value="CEMIP_X"/>
    <property type="match status" value="1"/>
</dbReference>
<dbReference type="Pfam" id="PF10162">
    <property type="entry name" value="G8"/>
    <property type="match status" value="1"/>
</dbReference>
<dbReference type="Pfam" id="PF15711">
    <property type="entry name" value="ILEI"/>
    <property type="match status" value="2"/>
</dbReference>
<dbReference type="SMART" id="SM01225">
    <property type="entry name" value="G8"/>
    <property type="match status" value="1"/>
</dbReference>
<dbReference type="SUPFAM" id="SSF51126">
    <property type="entry name" value="Pectin lyase-like"/>
    <property type="match status" value="1"/>
</dbReference>
<dbReference type="PROSITE" id="PS51484">
    <property type="entry name" value="G8"/>
    <property type="match status" value="1"/>
</dbReference>
<dbReference type="PROSITE" id="PS52031">
    <property type="entry name" value="GG_LECTIN"/>
    <property type="match status" value="2"/>
</dbReference>
<protein>
    <recommendedName>
        <fullName evidence="13">Cell surface hyaluronidase CEMIP2</fullName>
        <ecNumber evidence="9">3.2.1.35</ecNumber>
    </recommendedName>
    <alternativeName>
        <fullName evidence="14">Cell migration-inducing hyaluronidase 2</fullName>
    </alternativeName>
    <alternativeName>
        <fullName evidence="11">Transmembrane protein 2</fullName>
    </alternativeName>
</protein>
<reference key="1">
    <citation type="journal article" date="2000" name="Gene">
        <title>Refining the DFNB7-DFNB11 deafness locus using intragenic polymorphisms in a novel gene, TMEM2.</title>
        <authorList>
            <person name="Scott D.A."/>
            <person name="Drury S."/>
            <person name="Sundstrom R.A."/>
            <person name="Bishop J."/>
            <person name="Swiderski R.E."/>
            <person name="Carmi R."/>
            <person name="Ramesh A."/>
            <person name="Elbedour K."/>
            <person name="Srikumari Srisailapathy C.R."/>
            <person name="Keats B.J."/>
            <person name="Sheffield V.C."/>
            <person name="Smith R.J.H."/>
        </authorList>
    </citation>
    <scope>NUCLEOTIDE SEQUENCE [MRNA] (ISOFORM 1)</scope>
    <scope>TISSUE SPECIFICITY</scope>
    <source>
        <tissue>Fetal brain</tissue>
    </source>
</reference>
<reference key="2">
    <citation type="journal article" date="2000" name="DNA Res.">
        <title>Prediction of the coding sequences of unidentified human genes. XVI. The complete sequences of 150 new cDNA clones from brain which code for large proteins in vitro.</title>
        <authorList>
            <person name="Nagase T."/>
            <person name="Kikuno R."/>
            <person name="Ishikawa K."/>
            <person name="Hirosawa M."/>
            <person name="Ohara O."/>
        </authorList>
    </citation>
    <scope>NUCLEOTIDE SEQUENCE [LARGE SCALE MRNA] (ISOFORM 1)</scope>
    <source>
        <tissue>Brain</tissue>
    </source>
</reference>
<reference key="3">
    <citation type="journal article" date="2002" name="DNA Res.">
        <title>Construction of expression-ready cDNA clones for KIAA genes: manual curation of 330 KIAA cDNA clones.</title>
        <authorList>
            <person name="Nakajima D."/>
            <person name="Okazaki N."/>
            <person name="Yamakawa H."/>
            <person name="Kikuno R."/>
            <person name="Ohara O."/>
            <person name="Nagase T."/>
        </authorList>
    </citation>
    <scope>SEQUENCE REVISION</scope>
</reference>
<reference key="4">
    <citation type="journal article" date="2004" name="Nature">
        <title>DNA sequence and analysis of human chromosome 9.</title>
        <authorList>
            <person name="Humphray S.J."/>
            <person name="Oliver K."/>
            <person name="Hunt A.R."/>
            <person name="Plumb R.W."/>
            <person name="Loveland J.E."/>
            <person name="Howe K.L."/>
            <person name="Andrews T.D."/>
            <person name="Searle S."/>
            <person name="Hunt S.E."/>
            <person name="Scott C.E."/>
            <person name="Jones M.C."/>
            <person name="Ainscough R."/>
            <person name="Almeida J.P."/>
            <person name="Ambrose K.D."/>
            <person name="Ashwell R.I.S."/>
            <person name="Babbage A.K."/>
            <person name="Babbage S."/>
            <person name="Bagguley C.L."/>
            <person name="Bailey J."/>
            <person name="Banerjee R."/>
            <person name="Barker D.J."/>
            <person name="Barlow K.F."/>
            <person name="Bates K."/>
            <person name="Beasley H."/>
            <person name="Beasley O."/>
            <person name="Bird C.P."/>
            <person name="Bray-Allen S."/>
            <person name="Brown A.J."/>
            <person name="Brown J.Y."/>
            <person name="Burford D."/>
            <person name="Burrill W."/>
            <person name="Burton J."/>
            <person name="Carder C."/>
            <person name="Carter N.P."/>
            <person name="Chapman J.C."/>
            <person name="Chen Y."/>
            <person name="Clarke G."/>
            <person name="Clark S.Y."/>
            <person name="Clee C.M."/>
            <person name="Clegg S."/>
            <person name="Collier R.E."/>
            <person name="Corby N."/>
            <person name="Crosier M."/>
            <person name="Cummings A.T."/>
            <person name="Davies J."/>
            <person name="Dhami P."/>
            <person name="Dunn M."/>
            <person name="Dutta I."/>
            <person name="Dyer L.W."/>
            <person name="Earthrowl M.E."/>
            <person name="Faulkner L."/>
            <person name="Fleming C.J."/>
            <person name="Frankish A."/>
            <person name="Frankland J.A."/>
            <person name="French L."/>
            <person name="Fricker D.G."/>
            <person name="Garner P."/>
            <person name="Garnett J."/>
            <person name="Ghori J."/>
            <person name="Gilbert J.G.R."/>
            <person name="Glison C."/>
            <person name="Grafham D.V."/>
            <person name="Gribble S."/>
            <person name="Griffiths C."/>
            <person name="Griffiths-Jones S."/>
            <person name="Grocock R."/>
            <person name="Guy J."/>
            <person name="Hall R.E."/>
            <person name="Hammond S."/>
            <person name="Harley J.L."/>
            <person name="Harrison E.S.I."/>
            <person name="Hart E.A."/>
            <person name="Heath P.D."/>
            <person name="Henderson C.D."/>
            <person name="Hopkins B.L."/>
            <person name="Howard P.J."/>
            <person name="Howden P.J."/>
            <person name="Huckle E."/>
            <person name="Johnson C."/>
            <person name="Johnson D."/>
            <person name="Joy A.A."/>
            <person name="Kay M."/>
            <person name="Keenan S."/>
            <person name="Kershaw J.K."/>
            <person name="Kimberley A.M."/>
            <person name="King A."/>
            <person name="Knights A."/>
            <person name="Laird G.K."/>
            <person name="Langford C."/>
            <person name="Lawlor S."/>
            <person name="Leongamornlert D.A."/>
            <person name="Leversha M."/>
            <person name="Lloyd C."/>
            <person name="Lloyd D.M."/>
            <person name="Lovell J."/>
            <person name="Martin S."/>
            <person name="Mashreghi-Mohammadi M."/>
            <person name="Matthews L."/>
            <person name="McLaren S."/>
            <person name="McLay K.E."/>
            <person name="McMurray A."/>
            <person name="Milne S."/>
            <person name="Nickerson T."/>
            <person name="Nisbett J."/>
            <person name="Nordsiek G."/>
            <person name="Pearce A.V."/>
            <person name="Peck A.I."/>
            <person name="Porter K.M."/>
            <person name="Pandian R."/>
            <person name="Pelan S."/>
            <person name="Phillimore B."/>
            <person name="Povey S."/>
            <person name="Ramsey Y."/>
            <person name="Rand V."/>
            <person name="Scharfe M."/>
            <person name="Sehra H.K."/>
            <person name="Shownkeen R."/>
            <person name="Sims S.K."/>
            <person name="Skuce C.D."/>
            <person name="Smith M."/>
            <person name="Steward C.A."/>
            <person name="Swarbreck D."/>
            <person name="Sycamore N."/>
            <person name="Tester J."/>
            <person name="Thorpe A."/>
            <person name="Tracey A."/>
            <person name="Tromans A."/>
            <person name="Thomas D.W."/>
            <person name="Wall M."/>
            <person name="Wallis J.M."/>
            <person name="West A.P."/>
            <person name="Whitehead S.L."/>
            <person name="Willey D.L."/>
            <person name="Williams S.A."/>
            <person name="Wilming L."/>
            <person name="Wray P.W."/>
            <person name="Young L."/>
            <person name="Ashurst J.L."/>
            <person name="Coulson A."/>
            <person name="Blocker H."/>
            <person name="Durbin R.M."/>
            <person name="Sulston J.E."/>
            <person name="Hubbard T."/>
            <person name="Jackson M.J."/>
            <person name="Bentley D.R."/>
            <person name="Beck S."/>
            <person name="Rogers J."/>
            <person name="Dunham I."/>
        </authorList>
    </citation>
    <scope>NUCLEOTIDE SEQUENCE [LARGE SCALE GENOMIC DNA]</scope>
</reference>
<reference key="5">
    <citation type="submission" date="2005-07" db="EMBL/GenBank/DDBJ databases">
        <authorList>
            <person name="Mural R.J."/>
            <person name="Istrail S."/>
            <person name="Sutton G.G."/>
            <person name="Florea L."/>
            <person name="Halpern A.L."/>
            <person name="Mobarry C.M."/>
            <person name="Lippert R."/>
            <person name="Walenz B."/>
            <person name="Shatkay H."/>
            <person name="Dew I."/>
            <person name="Miller J.R."/>
            <person name="Flanigan M.J."/>
            <person name="Edwards N.J."/>
            <person name="Bolanos R."/>
            <person name="Fasulo D."/>
            <person name="Halldorsson B.V."/>
            <person name="Hannenhalli S."/>
            <person name="Turner R."/>
            <person name="Yooseph S."/>
            <person name="Lu F."/>
            <person name="Nusskern D.R."/>
            <person name="Shue B.C."/>
            <person name="Zheng X.H."/>
            <person name="Zhong F."/>
            <person name="Delcher A.L."/>
            <person name="Huson D.H."/>
            <person name="Kravitz S.A."/>
            <person name="Mouchard L."/>
            <person name="Reinert K."/>
            <person name="Remington K.A."/>
            <person name="Clark A.G."/>
            <person name="Waterman M.S."/>
            <person name="Eichler E.E."/>
            <person name="Adams M.D."/>
            <person name="Hunkapiller M.W."/>
            <person name="Myers E.W."/>
            <person name="Venter J.C."/>
        </authorList>
    </citation>
    <scope>NUCLEOTIDE SEQUENCE [LARGE SCALE GENOMIC DNA]</scope>
</reference>
<reference key="6">
    <citation type="journal article" date="2004" name="Genome Res.">
        <title>The status, quality, and expansion of the NIH full-length cDNA project: the Mammalian Gene Collection (MGC).</title>
        <authorList>
            <consortium name="The MGC Project Team"/>
        </authorList>
    </citation>
    <scope>NUCLEOTIDE SEQUENCE [LARGE SCALE MRNA] (ISOFORMS 1 AND 2)</scope>
</reference>
<reference key="7">
    <citation type="journal article" date="2004" name="Nat. Genet.">
        <title>Complete sequencing and characterization of 21,243 full-length human cDNAs.</title>
        <authorList>
            <person name="Ota T."/>
            <person name="Suzuki Y."/>
            <person name="Nishikawa T."/>
            <person name="Otsuki T."/>
            <person name="Sugiyama T."/>
            <person name="Irie R."/>
            <person name="Wakamatsu A."/>
            <person name="Hayashi K."/>
            <person name="Sato H."/>
            <person name="Nagai K."/>
            <person name="Kimura K."/>
            <person name="Makita H."/>
            <person name="Sekine M."/>
            <person name="Obayashi M."/>
            <person name="Nishi T."/>
            <person name="Shibahara T."/>
            <person name="Tanaka T."/>
            <person name="Ishii S."/>
            <person name="Yamamoto J."/>
            <person name="Saito K."/>
            <person name="Kawai Y."/>
            <person name="Isono Y."/>
            <person name="Nakamura Y."/>
            <person name="Nagahari K."/>
            <person name="Murakami K."/>
            <person name="Yasuda T."/>
            <person name="Iwayanagi T."/>
            <person name="Wagatsuma M."/>
            <person name="Shiratori A."/>
            <person name="Sudo H."/>
            <person name="Hosoiri T."/>
            <person name="Kaku Y."/>
            <person name="Kodaira H."/>
            <person name="Kondo H."/>
            <person name="Sugawara M."/>
            <person name="Takahashi M."/>
            <person name="Kanda K."/>
            <person name="Yokoi T."/>
            <person name="Furuya T."/>
            <person name="Kikkawa E."/>
            <person name="Omura Y."/>
            <person name="Abe K."/>
            <person name="Kamihara K."/>
            <person name="Katsuta N."/>
            <person name="Sato K."/>
            <person name="Tanikawa M."/>
            <person name="Yamazaki M."/>
            <person name="Ninomiya K."/>
            <person name="Ishibashi T."/>
            <person name="Yamashita H."/>
            <person name="Murakawa K."/>
            <person name="Fujimori K."/>
            <person name="Tanai H."/>
            <person name="Kimata M."/>
            <person name="Watanabe M."/>
            <person name="Hiraoka S."/>
            <person name="Chiba Y."/>
            <person name="Ishida S."/>
            <person name="Ono Y."/>
            <person name="Takiguchi S."/>
            <person name="Watanabe S."/>
            <person name="Yosida M."/>
            <person name="Hotuta T."/>
            <person name="Kusano J."/>
            <person name="Kanehori K."/>
            <person name="Takahashi-Fujii A."/>
            <person name="Hara H."/>
            <person name="Tanase T.-O."/>
            <person name="Nomura Y."/>
            <person name="Togiya S."/>
            <person name="Komai F."/>
            <person name="Hara R."/>
            <person name="Takeuchi K."/>
            <person name="Arita M."/>
            <person name="Imose N."/>
            <person name="Musashino K."/>
            <person name="Yuuki H."/>
            <person name="Oshima A."/>
            <person name="Sasaki N."/>
            <person name="Aotsuka S."/>
            <person name="Yoshikawa Y."/>
            <person name="Matsunawa H."/>
            <person name="Ichihara T."/>
            <person name="Shiohata N."/>
            <person name="Sano S."/>
            <person name="Moriya S."/>
            <person name="Momiyama H."/>
            <person name="Satoh N."/>
            <person name="Takami S."/>
            <person name="Terashima Y."/>
            <person name="Suzuki O."/>
            <person name="Nakagawa S."/>
            <person name="Senoh A."/>
            <person name="Mizoguchi H."/>
            <person name="Goto Y."/>
            <person name="Shimizu F."/>
            <person name="Wakebe H."/>
            <person name="Hishigaki H."/>
            <person name="Watanabe T."/>
            <person name="Sugiyama A."/>
            <person name="Takemoto M."/>
            <person name="Kawakami B."/>
            <person name="Yamazaki M."/>
            <person name="Watanabe K."/>
            <person name="Kumagai A."/>
            <person name="Itakura S."/>
            <person name="Fukuzumi Y."/>
            <person name="Fujimori Y."/>
            <person name="Komiyama M."/>
            <person name="Tashiro H."/>
            <person name="Tanigami A."/>
            <person name="Fujiwara T."/>
            <person name="Ono T."/>
            <person name="Yamada K."/>
            <person name="Fujii Y."/>
            <person name="Ozaki K."/>
            <person name="Hirao M."/>
            <person name="Ohmori Y."/>
            <person name="Kawabata A."/>
            <person name="Hikiji T."/>
            <person name="Kobatake N."/>
            <person name="Inagaki H."/>
            <person name="Ikema Y."/>
            <person name="Okamoto S."/>
            <person name="Okitani R."/>
            <person name="Kawakami T."/>
            <person name="Noguchi S."/>
            <person name="Itoh T."/>
            <person name="Shigeta K."/>
            <person name="Senba T."/>
            <person name="Matsumura K."/>
            <person name="Nakajima Y."/>
            <person name="Mizuno T."/>
            <person name="Morinaga M."/>
            <person name="Sasaki M."/>
            <person name="Togashi T."/>
            <person name="Oyama M."/>
            <person name="Hata H."/>
            <person name="Watanabe M."/>
            <person name="Komatsu T."/>
            <person name="Mizushima-Sugano J."/>
            <person name="Satoh T."/>
            <person name="Shirai Y."/>
            <person name="Takahashi Y."/>
            <person name="Nakagawa K."/>
            <person name="Okumura K."/>
            <person name="Nagase T."/>
            <person name="Nomura N."/>
            <person name="Kikuchi H."/>
            <person name="Masuho Y."/>
            <person name="Yamashita R."/>
            <person name="Nakai K."/>
            <person name="Yada T."/>
            <person name="Nakamura Y."/>
            <person name="Ohara O."/>
            <person name="Isogai T."/>
            <person name="Sugano S."/>
        </authorList>
    </citation>
    <scope>NUCLEOTIDE SEQUENCE [LARGE SCALE MRNA] OF 579-1383</scope>
    <source>
        <tissue>Teratocarcinoma</tissue>
    </source>
</reference>
<reference key="8">
    <citation type="journal article" date="2008" name="Proc. Natl. Acad. Sci. U.S.A.">
        <title>A quantitative atlas of mitotic phosphorylation.</title>
        <authorList>
            <person name="Dephoure N."/>
            <person name="Zhou C."/>
            <person name="Villen J."/>
            <person name="Beausoleil S.A."/>
            <person name="Bakalarski C.E."/>
            <person name="Elledge S.J."/>
            <person name="Gygi S.P."/>
        </authorList>
    </citation>
    <scope>PHOSPHORYLATION [LARGE SCALE ANALYSIS] AT SER-10 AND SER-63</scope>
    <scope>IDENTIFICATION BY MASS SPECTROMETRY [LARGE SCALE ANALYSIS]</scope>
    <source>
        <tissue>Cervix carcinoma</tissue>
    </source>
</reference>
<reference key="9">
    <citation type="journal article" date="2011" name="BMC Syst. Biol.">
        <title>Initial characterization of the human central proteome.</title>
        <authorList>
            <person name="Burkard T.R."/>
            <person name="Planyavsky M."/>
            <person name="Kaupe I."/>
            <person name="Breitwieser F.P."/>
            <person name="Buerckstuemmer T."/>
            <person name="Bennett K.L."/>
            <person name="Superti-Furga G."/>
            <person name="Colinge J."/>
        </authorList>
    </citation>
    <scope>IDENTIFICATION BY MASS SPECTROMETRY [LARGE SCALE ANALYSIS]</scope>
</reference>
<reference key="10">
    <citation type="journal article" date="2023" name="J. Biol. Chem.">
        <title>Human TMEM2 is not a catalytic hyaluronidase, but a regulator of hyaluronan metabolism via HYBID (KIAA1199/CEMIP) and HAS2 expression.</title>
        <authorList>
            <person name="Sato S."/>
            <person name="Miyazaki M."/>
            <person name="Fukuda S."/>
            <person name="Mizutani Y."/>
            <person name="Mizukami Y."/>
            <person name="Higashiyama S."/>
            <person name="Inoue S."/>
        </authorList>
    </citation>
    <scope>FUNCTION</scope>
    <scope>INDUCTION</scope>
</reference>
<reference key="11">
    <citation type="journal article" date="2023" name="J. Biol. Chem.">
        <title>TMEM2 is a bona fide hyaluronidase possessing intrinsic catalytic activity.</title>
        <authorList>
            <person name="Narita T."/>
            <person name="Tobisawa Y."/>
            <person name="Bobkov A."/>
            <person name="Jackson M."/>
            <person name="Ohyama C."/>
            <person name="Irie F."/>
            <person name="Yamaguchi Y."/>
        </authorList>
    </citation>
    <scope>FUNCTION</scope>
    <scope>CATALYTIC ACTIVITY</scope>
</reference>
<reference evidence="15" key="12">
    <citation type="submission" date="2023-01" db="PDB data bank">
        <title>Structure of the TMEM2 ectodomain and its lack of hyaluronidase activity.</title>
        <authorList>
            <person name="Niu M."/>
            <person name="McGrath M."/>
            <person name="Sammon D."/>
            <person name="Gardner S."/>
            <person name="Morgan R.M."/>
            <person name="Bubeck D."/>
            <person name="Hohenester E."/>
        </authorList>
    </citation>
    <scope>X-RAY CRYSTALLOGRAPHY (3.50 ANGSTROMS) OF 106-1383</scope>
</reference>
<comment type="function">
    <text evidence="1 2 9">Cell surface hyaluronidase that mediates the initial cleavage of extracellular high-molecular-weight hyaluronan into intermediate-size hyaluronan of approximately 10-5 kDa fragments (PubMed:37527776). Very specific to hyaluronan; not able to cleave chondroitin sulfate or dermatan sulfate. Has an essential function in systemic hyaluronan catabolism and turnover and regulates cell adhesion and migration via hyaluronan degradation at focal adhesion sites (By similarity). Acts as a regulator of angiogenesis and heart morphogenesis by mediating degradation of extracellular hyaluronan, thereby regulating VEGF signaling (By similarity).</text>
</comment>
<comment type="catalytic activity">
    <reaction evidence="9">
        <text>Random hydrolysis of (1-&gt;4)-linkages between N-acetyl-beta-D-glucosamine and D-glucuronate residues in hyaluronate.</text>
        <dbReference type="EC" id="3.2.1.35"/>
    </reaction>
</comment>
<comment type="subcellular location">
    <subcellularLocation>
        <location evidence="2">Cell membrane</location>
        <topology evidence="2">Single-pass type II membrane protein</topology>
    </subcellularLocation>
</comment>
<comment type="alternative products">
    <event type="alternative splicing"/>
    <isoform>
        <id>Q9UHN6-1</id>
        <name>1</name>
        <sequence type="displayed"/>
    </isoform>
    <isoform>
        <id>Q9UHN6-2</id>
        <name>2</name>
        <sequence type="described" ref="VSP_041401"/>
    </isoform>
</comment>
<comment type="tissue specificity">
    <text evidence="7">Widely expressed.</text>
</comment>
<comment type="induction">
    <text evidence="8">Up-regulated in by proinflammatory cytokines in normal human dermal fibroblasts (NHDF).</text>
</comment>
<comment type="similarity">
    <text evidence="13">Belongs to the CEMIP family.</text>
</comment>
<comment type="caution">
    <text evidence="8 9">A contradictory paper, using a cell-based assay with transfected 293T cell, reports that TMEM2 has no catalytic hyaluronic acid-degrading activity, although mouse TMEM2 exhibits hyaluronic acid-degrading activity in the same assay (PubMed:37196767). However, in Ref.12, authors claim a possible explanation for these contradictory results, they show that cell-based CEMIP2 hyaluronidase assays, as employed by Sato et al., can be confounded by the presence of unidentified factor(s) in cultures that suppress the hyaluronidase activity of CEMIP2 (PubMed:37527776).</text>
</comment>
<comment type="sequence caution" evidence="13">
    <conflict type="erroneous initiation">
        <sequence resource="EMBL-CDS" id="BAA92650"/>
    </conflict>
    <text>Extended N-terminus.</text>
</comment>
<comment type="sequence caution" evidence="13">
    <conflict type="erroneous initiation">
        <sequence resource="EMBL-CDS" id="BAC11574"/>
    </conflict>
    <text>Truncated N-terminus.</text>
</comment>
<proteinExistence type="evidence at protein level"/>
<feature type="chain" id="PRO_0000289972" description="Cell surface hyaluronidase CEMIP2">
    <location>
        <begin position="1"/>
        <end position="1383"/>
    </location>
</feature>
<feature type="topological domain" description="Cytoplasmic" evidence="2">
    <location>
        <begin position="1"/>
        <end position="82"/>
    </location>
</feature>
<feature type="transmembrane region" description="Helical; Signal-anchor for type II membrane protein" evidence="3">
    <location>
        <begin position="83"/>
        <end position="103"/>
    </location>
</feature>
<feature type="topological domain" description="Extracellular" evidence="2">
    <location>
        <begin position="104"/>
        <end position="1383"/>
    </location>
</feature>
<feature type="domain" description="G8" evidence="4">
    <location>
        <begin position="121"/>
        <end position="245"/>
    </location>
</feature>
<feature type="domain" description="GG-type lectin 1" evidence="5">
    <location>
        <begin position="255"/>
        <end position="412"/>
    </location>
</feature>
<feature type="repeat" description="PbH1 1">
    <location>
        <begin position="669"/>
        <end position="691"/>
    </location>
</feature>
<feature type="repeat" description="PbH1 2">
    <location>
        <begin position="711"/>
        <end position="733"/>
    </location>
</feature>
<feature type="repeat" description="PbH1 3">
    <location>
        <begin position="791"/>
        <end position="812"/>
    </location>
</feature>
<feature type="domain" description="GG-type lectin 2" evidence="5">
    <location>
        <begin position="1208"/>
        <end position="1366"/>
    </location>
</feature>
<feature type="region of interest" description="Disordered" evidence="6">
    <location>
        <begin position="1"/>
        <end position="50"/>
    </location>
</feature>
<feature type="modified residue" description="Phosphoserine" evidence="16">
    <location>
        <position position="10"/>
    </location>
</feature>
<feature type="modified residue" description="Phosphoserine" evidence="16">
    <location>
        <position position="63"/>
    </location>
</feature>
<feature type="glycosylation site" description="N-linked (GlcNAc...) asparagine" evidence="3">
    <location>
        <position position="248"/>
    </location>
</feature>
<feature type="glycosylation site" description="N-linked (GlcNAc...) asparagine" evidence="3">
    <location>
        <position position="292"/>
    </location>
</feature>
<feature type="glycosylation site" description="N-linked (GlcNAc...) asparagine" evidence="3">
    <location>
        <position position="914"/>
    </location>
</feature>
<feature type="glycosylation site" description="N-linked (GlcNAc...) asparagine" evidence="3">
    <location>
        <position position="1234"/>
    </location>
</feature>
<feature type="splice variant" id="VSP_041401" description="In isoform 2." evidence="12">
    <location>
        <begin position="402"/>
        <end position="464"/>
    </location>
</feature>
<feature type="sequence variant" id="VAR_032669" description="In dbSNP:rs25688.">
    <original>R</original>
    <variation>K</variation>
    <location>
        <position position="245"/>
    </location>
</feature>
<feature type="sequence variant" id="VAR_032670" description="In dbSNP:rs25689.">
    <original>R</original>
    <variation>H</variation>
    <location>
        <position position="291"/>
    </location>
</feature>
<feature type="sequence variant" id="VAR_062197" description="In dbSNP:rs25689.">
    <original>R</original>
    <variation>L</variation>
    <location>
        <position position="291"/>
    </location>
</feature>
<feature type="sequence variant" id="VAR_062198" description="In dbSNP:rs25689.">
    <original>R</original>
    <variation>P</variation>
    <location>
        <position position="291"/>
    </location>
</feature>
<feature type="sequence variant" id="VAR_032671" description="In dbSNP:rs25695.">
    <original>D</original>
    <variation>E</variation>
    <location>
        <position position="423"/>
    </location>
</feature>
<feature type="sequence variant" id="VAR_032672" description="In dbSNP:rs25692.">
    <original>P</original>
    <variation>S</variation>
    <location>
        <position position="765"/>
    </location>
</feature>
<feature type="sequence variant" id="VAR_032673" description="In dbSNP:rs17057133.">
    <original>I</original>
    <variation>V</variation>
    <location>
        <position position="1010"/>
    </location>
</feature>
<feature type="sequence variant" id="VAR_032674" description="In dbSNP:rs2297089.">
    <original>S</original>
    <variation>N</variation>
    <location>
        <position position="1254"/>
    </location>
</feature>
<feature type="sequence variant" id="VAR_032675" description="In dbSNP:rs17475375.">
    <original>G</original>
    <variation>D</variation>
    <location>
        <position position="1280"/>
    </location>
</feature>
<feature type="sequence conflict" description="In Ref. 7; BAC11574." evidence="13" ref="7">
    <original>T</original>
    <variation>A</variation>
    <location>
        <position position="1223"/>
    </location>
</feature>
<feature type="sequence conflict" description="In Ref. 7; BAC11574." evidence="13" ref="7">
    <original>I</original>
    <variation>V</variation>
    <location>
        <position position="1322"/>
    </location>
</feature>
<feature type="strand" evidence="17">
    <location>
        <begin position="121"/>
        <end position="123"/>
    </location>
</feature>
<feature type="strand" evidence="17">
    <location>
        <begin position="127"/>
        <end position="135"/>
    </location>
</feature>
<feature type="strand" evidence="17">
    <location>
        <begin position="140"/>
        <end position="143"/>
    </location>
</feature>
<feature type="strand" evidence="17">
    <location>
        <begin position="147"/>
        <end position="154"/>
    </location>
</feature>
<feature type="strand" evidence="17">
    <location>
        <begin position="159"/>
        <end position="162"/>
    </location>
</feature>
<feature type="strand" evidence="17">
    <location>
        <begin position="166"/>
        <end position="168"/>
    </location>
</feature>
<feature type="strand" evidence="17">
    <location>
        <begin position="172"/>
        <end position="181"/>
    </location>
</feature>
<feature type="strand" evidence="17">
    <location>
        <begin position="186"/>
        <end position="190"/>
    </location>
</feature>
<feature type="strand" evidence="17">
    <location>
        <begin position="192"/>
        <end position="194"/>
    </location>
</feature>
<feature type="strand" evidence="17">
    <location>
        <begin position="200"/>
        <end position="204"/>
    </location>
</feature>
<feature type="strand" evidence="17">
    <location>
        <begin position="215"/>
        <end position="217"/>
    </location>
</feature>
<feature type="strand" evidence="17">
    <location>
        <begin position="219"/>
        <end position="224"/>
    </location>
</feature>
<feature type="strand" evidence="17">
    <location>
        <begin position="229"/>
        <end position="233"/>
    </location>
</feature>
<feature type="strand" evidence="17">
    <location>
        <begin position="240"/>
        <end position="245"/>
    </location>
</feature>
<feature type="helix" evidence="17">
    <location>
        <begin position="249"/>
        <end position="251"/>
    </location>
</feature>
<feature type="strand" evidence="17">
    <location>
        <begin position="252"/>
        <end position="254"/>
    </location>
</feature>
<feature type="strand" evidence="17">
    <location>
        <begin position="257"/>
        <end position="262"/>
    </location>
</feature>
<feature type="strand" evidence="17">
    <location>
        <begin position="266"/>
        <end position="272"/>
    </location>
</feature>
<feature type="turn" evidence="17">
    <location>
        <begin position="274"/>
        <end position="276"/>
    </location>
</feature>
<feature type="strand" evidence="17">
    <location>
        <begin position="279"/>
        <end position="285"/>
    </location>
</feature>
<feature type="turn" evidence="17">
    <location>
        <begin position="287"/>
        <end position="289"/>
    </location>
</feature>
<feature type="helix" evidence="17">
    <location>
        <begin position="293"/>
        <end position="302"/>
    </location>
</feature>
<feature type="strand" evidence="17">
    <location>
        <begin position="309"/>
        <end position="314"/>
    </location>
</feature>
<feature type="strand" evidence="17">
    <location>
        <begin position="319"/>
        <end position="321"/>
    </location>
</feature>
<feature type="helix" evidence="17">
    <location>
        <begin position="324"/>
        <end position="334"/>
    </location>
</feature>
<feature type="helix" evidence="17">
    <location>
        <begin position="339"/>
        <end position="341"/>
    </location>
</feature>
<feature type="strand" evidence="17">
    <location>
        <begin position="347"/>
        <end position="353"/>
    </location>
</feature>
<feature type="turn" evidence="17">
    <location>
        <begin position="357"/>
        <end position="360"/>
    </location>
</feature>
<feature type="strand" evidence="17">
    <location>
        <begin position="362"/>
        <end position="366"/>
    </location>
</feature>
<feature type="strand" evidence="17">
    <location>
        <begin position="378"/>
        <end position="384"/>
    </location>
</feature>
<feature type="strand" evidence="17">
    <location>
        <begin position="390"/>
        <end position="400"/>
    </location>
</feature>
<feature type="strand" evidence="17">
    <location>
        <begin position="403"/>
        <end position="412"/>
    </location>
</feature>
<feature type="strand" evidence="17">
    <location>
        <begin position="416"/>
        <end position="422"/>
    </location>
</feature>
<feature type="strand" evidence="17">
    <location>
        <begin position="432"/>
        <end position="435"/>
    </location>
</feature>
<feature type="helix" evidence="17">
    <location>
        <begin position="442"/>
        <end position="444"/>
    </location>
</feature>
<feature type="strand" evidence="17">
    <location>
        <begin position="446"/>
        <end position="451"/>
    </location>
</feature>
<feature type="strand" evidence="17">
    <location>
        <begin position="460"/>
        <end position="465"/>
    </location>
</feature>
<feature type="strand" evidence="17">
    <location>
        <begin position="474"/>
        <end position="476"/>
    </location>
</feature>
<feature type="strand" evidence="17">
    <location>
        <begin position="484"/>
        <end position="487"/>
    </location>
</feature>
<feature type="strand" evidence="17">
    <location>
        <begin position="491"/>
        <end position="496"/>
    </location>
</feature>
<feature type="turn" evidence="17">
    <location>
        <begin position="508"/>
        <end position="510"/>
    </location>
</feature>
<feature type="strand" evidence="17">
    <location>
        <begin position="518"/>
        <end position="522"/>
    </location>
</feature>
<feature type="strand" evidence="17">
    <location>
        <begin position="527"/>
        <end position="533"/>
    </location>
</feature>
<feature type="strand" evidence="17">
    <location>
        <begin position="535"/>
        <end position="539"/>
    </location>
</feature>
<feature type="strand" evidence="17">
    <location>
        <begin position="541"/>
        <end position="543"/>
    </location>
</feature>
<feature type="strand" evidence="17">
    <location>
        <begin position="550"/>
        <end position="556"/>
    </location>
</feature>
<feature type="turn" evidence="17">
    <location>
        <begin position="559"/>
        <end position="562"/>
    </location>
</feature>
<feature type="strand" evidence="17">
    <location>
        <begin position="568"/>
        <end position="571"/>
    </location>
</feature>
<feature type="strand" evidence="17">
    <location>
        <begin position="573"/>
        <end position="576"/>
    </location>
</feature>
<feature type="strand" evidence="17">
    <location>
        <begin position="581"/>
        <end position="589"/>
    </location>
</feature>
<feature type="strand" evidence="17">
    <location>
        <begin position="591"/>
        <end position="594"/>
    </location>
</feature>
<feature type="strand" evidence="17">
    <location>
        <begin position="596"/>
        <end position="602"/>
    </location>
</feature>
<feature type="strand" evidence="17">
    <location>
        <begin position="604"/>
        <end position="607"/>
    </location>
</feature>
<feature type="strand" evidence="17">
    <location>
        <begin position="616"/>
        <end position="619"/>
    </location>
</feature>
<feature type="strand" evidence="17">
    <location>
        <begin position="621"/>
        <end position="626"/>
    </location>
</feature>
<feature type="strand" evidence="17">
    <location>
        <begin position="629"/>
        <end position="631"/>
    </location>
</feature>
<feature type="turn" evidence="17">
    <location>
        <begin position="632"/>
        <end position="634"/>
    </location>
</feature>
<feature type="helix" evidence="17">
    <location>
        <begin position="637"/>
        <end position="640"/>
    </location>
</feature>
<feature type="turn" evidence="17">
    <location>
        <begin position="655"/>
        <end position="658"/>
    </location>
</feature>
<feature type="strand" evidence="17">
    <location>
        <begin position="663"/>
        <end position="671"/>
    </location>
</feature>
<feature type="strand" evidence="17">
    <location>
        <begin position="673"/>
        <end position="676"/>
    </location>
</feature>
<feature type="strand" evidence="17">
    <location>
        <begin position="678"/>
        <end position="694"/>
    </location>
</feature>
<feature type="helix" evidence="17">
    <location>
        <begin position="697"/>
        <end position="699"/>
    </location>
</feature>
<feature type="helix" evidence="17">
    <location>
        <begin position="708"/>
        <end position="710"/>
    </location>
</feature>
<feature type="strand" evidence="17">
    <location>
        <begin position="716"/>
        <end position="735"/>
    </location>
</feature>
<feature type="strand" evidence="17">
    <location>
        <begin position="751"/>
        <end position="753"/>
    </location>
</feature>
<feature type="helix" evidence="17">
    <location>
        <begin position="761"/>
        <end position="763"/>
    </location>
</feature>
<feature type="strand" evidence="17">
    <location>
        <begin position="772"/>
        <end position="781"/>
    </location>
</feature>
<feature type="strand" evidence="17">
    <location>
        <begin position="783"/>
        <end position="789"/>
    </location>
</feature>
<feature type="strand" evidence="17">
    <location>
        <begin position="791"/>
        <end position="798"/>
    </location>
</feature>
<feature type="strand" evidence="17">
    <location>
        <begin position="800"/>
        <end position="803"/>
    </location>
</feature>
<feature type="strand" evidence="17">
    <location>
        <begin position="805"/>
        <end position="810"/>
    </location>
</feature>
<feature type="strand" evidence="17">
    <location>
        <begin position="814"/>
        <end position="816"/>
    </location>
</feature>
<feature type="strand" evidence="17">
    <location>
        <begin position="818"/>
        <end position="821"/>
    </location>
</feature>
<feature type="strand" evidence="17">
    <location>
        <begin position="824"/>
        <end position="828"/>
    </location>
</feature>
<feature type="strand" evidence="17">
    <location>
        <begin position="830"/>
        <end position="834"/>
    </location>
</feature>
<feature type="strand" evidence="17">
    <location>
        <begin position="848"/>
        <end position="850"/>
    </location>
</feature>
<feature type="strand" evidence="17">
    <location>
        <begin position="852"/>
        <end position="854"/>
    </location>
</feature>
<feature type="strand" evidence="17">
    <location>
        <begin position="857"/>
        <end position="859"/>
    </location>
</feature>
<feature type="strand" evidence="17">
    <location>
        <begin position="861"/>
        <end position="863"/>
    </location>
</feature>
<feature type="strand" evidence="17">
    <location>
        <begin position="869"/>
        <end position="873"/>
    </location>
</feature>
<feature type="strand" evidence="17">
    <location>
        <begin position="878"/>
        <end position="882"/>
    </location>
</feature>
<feature type="strand" evidence="17">
    <location>
        <begin position="884"/>
        <end position="886"/>
    </location>
</feature>
<feature type="strand" evidence="17">
    <location>
        <begin position="897"/>
        <end position="901"/>
    </location>
</feature>
<feature type="strand" evidence="17">
    <location>
        <begin position="914"/>
        <end position="917"/>
    </location>
</feature>
<feature type="turn" evidence="17">
    <location>
        <begin position="935"/>
        <end position="937"/>
    </location>
</feature>
<feature type="helix" evidence="17">
    <location>
        <begin position="943"/>
        <end position="946"/>
    </location>
</feature>
<feature type="strand" evidence="17">
    <location>
        <begin position="949"/>
        <end position="959"/>
    </location>
</feature>
<feature type="strand" evidence="17">
    <location>
        <begin position="961"/>
        <end position="967"/>
    </location>
</feature>
<feature type="strand" evidence="17">
    <location>
        <begin position="979"/>
        <end position="981"/>
    </location>
</feature>
<feature type="turn" evidence="17">
    <location>
        <begin position="982"/>
        <end position="985"/>
    </location>
</feature>
<feature type="strand" evidence="17">
    <location>
        <begin position="986"/>
        <end position="989"/>
    </location>
</feature>
<feature type="strand" evidence="17">
    <location>
        <begin position="993"/>
        <end position="1000"/>
    </location>
</feature>
<feature type="strand" evidence="17">
    <location>
        <begin position="1008"/>
        <end position="1012"/>
    </location>
</feature>
<feature type="strand" evidence="17">
    <location>
        <begin position="1015"/>
        <end position="1022"/>
    </location>
</feature>
<feature type="strand" evidence="17">
    <location>
        <begin position="1027"/>
        <end position="1030"/>
    </location>
</feature>
<feature type="strand" evidence="17">
    <location>
        <begin position="1037"/>
        <end position="1041"/>
    </location>
</feature>
<feature type="strand" evidence="17">
    <location>
        <begin position="1043"/>
        <end position="1051"/>
    </location>
</feature>
<feature type="strand" evidence="17">
    <location>
        <begin position="1054"/>
        <end position="1062"/>
    </location>
</feature>
<feature type="strand" evidence="17">
    <location>
        <begin position="1068"/>
        <end position="1074"/>
    </location>
</feature>
<feature type="strand" evidence="17">
    <location>
        <begin position="1080"/>
        <end position="1088"/>
    </location>
</feature>
<feature type="turn" evidence="17">
    <location>
        <begin position="1090"/>
        <end position="1092"/>
    </location>
</feature>
<feature type="strand" evidence="17">
    <location>
        <begin position="1095"/>
        <end position="1100"/>
    </location>
</feature>
<feature type="helix" evidence="17">
    <location>
        <begin position="1107"/>
        <end position="1112"/>
    </location>
</feature>
<feature type="strand" evidence="17">
    <location>
        <begin position="1114"/>
        <end position="1122"/>
    </location>
</feature>
<feature type="turn" evidence="17">
    <location>
        <begin position="1123"/>
        <end position="1126"/>
    </location>
</feature>
<feature type="strand" evidence="17">
    <location>
        <begin position="1127"/>
        <end position="1133"/>
    </location>
</feature>
<feature type="strand" evidence="17">
    <location>
        <begin position="1143"/>
        <end position="1145"/>
    </location>
</feature>
<feature type="strand" evidence="17">
    <location>
        <begin position="1148"/>
        <end position="1157"/>
    </location>
</feature>
<feature type="helix" evidence="17">
    <location>
        <begin position="1167"/>
        <end position="1170"/>
    </location>
</feature>
<feature type="turn" evidence="17">
    <location>
        <begin position="1171"/>
        <end position="1174"/>
    </location>
</feature>
<feature type="strand" evidence="17">
    <location>
        <begin position="1210"/>
        <end position="1217"/>
    </location>
</feature>
<feature type="helix" evidence="17">
    <location>
        <begin position="1220"/>
        <end position="1225"/>
    </location>
</feature>
<feature type="strand" evidence="17">
    <location>
        <begin position="1229"/>
        <end position="1235"/>
    </location>
</feature>
<feature type="strand" evidence="17">
    <location>
        <begin position="1237"/>
        <end position="1240"/>
    </location>
</feature>
<feature type="strand" evidence="17">
    <location>
        <begin position="1242"/>
        <end position="1253"/>
    </location>
</feature>
<feature type="strand" evidence="17">
    <location>
        <begin position="1258"/>
        <end position="1267"/>
    </location>
</feature>
<feature type="helix" evidence="17">
    <location>
        <begin position="1268"/>
        <end position="1272"/>
    </location>
</feature>
<feature type="helix" evidence="17">
    <location>
        <begin position="1273"/>
        <end position="1278"/>
    </location>
</feature>
<feature type="strand" evidence="17">
    <location>
        <begin position="1286"/>
        <end position="1293"/>
    </location>
</feature>
<feature type="turn" evidence="17">
    <location>
        <begin position="1299"/>
        <end position="1308"/>
    </location>
</feature>
<feature type="strand" evidence="17">
    <location>
        <begin position="1321"/>
        <end position="1326"/>
    </location>
</feature>
<feature type="strand" evidence="17">
    <location>
        <begin position="1336"/>
        <end position="1339"/>
    </location>
</feature>
<feature type="turn" evidence="17">
    <location>
        <begin position="1342"/>
        <end position="1344"/>
    </location>
</feature>
<feature type="strand" evidence="17">
    <location>
        <begin position="1347"/>
        <end position="1354"/>
    </location>
</feature>
<feature type="turn" evidence="17">
    <location>
        <begin position="1358"/>
        <end position="1361"/>
    </location>
</feature>
<feature type="helix" evidence="17">
    <location>
        <begin position="1371"/>
        <end position="1378"/>
    </location>
</feature>
<name>CEIP2_HUMAN</name>
<sequence length="1383" mass="154374">MYATDSRGHSPAFLQPQNGNSRHPSGYVPGKVVPLRPPPPPKSQASAKFTSIRREDRATFAFSPEEQQAQRESQKQKRHKNTFICFAITSFSFFIALAIILGISSKYAPDENCPDQNPRLRNWDPGQDSAKQVVIKEGDMLRLTSDATVHSIVIQDGGLLVFGDNKDGSRNITLRTHYILIQDGGALHIGAEKCRYKSKATITLYGKSDEGESMPTFGKKFIGVEAGGTLELHGARKASWTLLARTLNSSGLPFGSYTFEKDFSRGLNVRVIDQDTAKILESERFDTHEYRNESRRLQEFLRFQDPGRIVAIAVGDSAAKSLLQGTIQMIQERLGSELIQGLGYRQAWALVGVIDGGSTSCNESVRNYENHSSGGKALAQREFYTVDGQKFSVTAYSEWIEGVSLSGFRVEVVDGVKLNLLDDVSSWKPGDQIVVASTDYSMYQAEEFTLLPCSECSHFQVKVKETPQFLHMGEIIDGVDMRAEVGILTRNIVIQGEVEDSCYAENQCQFFDYDTFGGHIMIMKNFTSVHLSYVELKHMGQQQMGRYPVHFHLCGDVDYKGGYRHATFVDGLSIHHSFSRCITVHGTNGLLIKDTIGFDTLGHCFFLEDGIEQRNTLFHNLGLLTKPGTLLPTDRNNSMCTTMRDKVFGNYIPVPATDCMAVSTFWIAHPNNNLINNAAAGSQDAGIWYLFHKEPTGESSGLQLLAKPELTPLGIFYNNRVHSNFKAGLFIDKGVKTTNSSAADPREYLCLDNSARFRPHQDANPEKPRVAALIDRLIAFKNNDNGAWVRGGDIIVQNSAFADNGIGLTFASDGSFPSDEGSSQEVSESLFVGESRNYGFQGGQNKYVGTGGIDQKPRTLPRNRTFPIRGFQIYDGPIHLTRSTFKKYVPTPDRYSSAIGFLMKNSWQITPRNNISLVKFGPHVSLNVFFGKPGPWFEDCEMDGDKNSIFHDIDGSVTGYKDAYVGRMDNYLIRHPSCVNVSKWNAVICSGTYAQVYVQTWSTQNLSMTITRDEYPSNPMVLRGINQKAAFPQYQPVVMLEKGYTIHWNGPAPRTTFLYLVNFNKNDWIRVGLCYPSNTSFQVTFGYLQRQNGSLSKIEEYEPVHSLEELQRKQSERKFYFDSSTGLLFLYLKAKSHRHGHSYCSSQGCERVKIQAATDSKDISNCMAKAYPQYYRKPSVVKRMPAMLTGLCQGCGTRQVVFTSDPHKSYLPVQFQSPDKAETQRGDPSVISVNGTDFTFRSAGVLLLVVDPCSVPFRLTEKTVFPLADVSRIEEYLKTGIPPRSIVLLSTRGEIKQLNISHLLVPLGLAKPAHLYDKGSTIFLGFSGNFKPSWTKLFTSPAGQGLGVLEQFIPLQLDEYGCPRATTVRRRDLELLKQASKAH</sequence>
<gene>
    <name evidence="14" type="primary">CEMIP2</name>
    <name evidence="10" type="synonym">KIAA1412</name>
    <name evidence="11" type="synonym">TMEM2</name>
</gene>
<keyword id="KW-0002">3D-structure</keyword>
<keyword id="KW-0025">Alternative splicing</keyword>
<keyword id="KW-0037">Angiogenesis</keyword>
<keyword id="KW-1003">Cell membrane</keyword>
<keyword id="KW-0217">Developmental protein</keyword>
<keyword id="KW-0325">Glycoprotein</keyword>
<keyword id="KW-0326">Glycosidase</keyword>
<keyword id="KW-0378">Hydrolase</keyword>
<keyword id="KW-0430">Lectin</keyword>
<keyword id="KW-0472">Membrane</keyword>
<keyword id="KW-0597">Phosphoprotein</keyword>
<keyword id="KW-1267">Proteomics identification</keyword>
<keyword id="KW-1185">Reference proteome</keyword>
<keyword id="KW-0677">Repeat</keyword>
<keyword id="KW-0735">Signal-anchor</keyword>
<keyword id="KW-0812">Transmembrane</keyword>
<keyword id="KW-1133">Transmembrane helix</keyword>
<organism>
    <name type="scientific">Homo sapiens</name>
    <name type="common">Human</name>
    <dbReference type="NCBI Taxonomy" id="9606"/>
    <lineage>
        <taxon>Eukaryota</taxon>
        <taxon>Metazoa</taxon>
        <taxon>Chordata</taxon>
        <taxon>Craniata</taxon>
        <taxon>Vertebrata</taxon>
        <taxon>Euteleostomi</taxon>
        <taxon>Mammalia</taxon>
        <taxon>Eutheria</taxon>
        <taxon>Euarchontoglires</taxon>
        <taxon>Primates</taxon>
        <taxon>Haplorrhini</taxon>
        <taxon>Catarrhini</taxon>
        <taxon>Hominidae</taxon>
        <taxon>Homo</taxon>
    </lineage>
</organism>